<protein>
    <recommendedName>
        <fullName>Treslin</fullName>
    </recommendedName>
    <alternativeName>
        <fullName>TopBP1-interacting checkpoint and replication regulator</fullName>
    </alternativeName>
    <alternativeName>
        <fullName>TopBP1-interacting, replication-stimulating protein</fullName>
    </alternativeName>
</protein>
<gene>
    <name type="primary">Ticrr</name>
</gene>
<comment type="function">
    <text evidence="1">Regulator of DNA replication and S/M and G2/M checkpoints. Regulates the triggering of DNA replication initiation via its interaction with TOPBP1 by participating in CDK2-mediated loading of CDC45L onto replication origins. Required for the transition from pre-replication complex (pre-RC) to pre-initiation complex (pre-IC). Required to prevent mitotic entry after treatment with ionizing radiation (By similarity).</text>
</comment>
<comment type="subunit">
    <text evidence="1 2">Interacts with TOPBP1 (via BRCT domains); interaction takes place in a CDK2-dependent manner (By similarity). Component of the replisome complex composed of at least DONSON, MCM2, MCM7, PCNA and TICRR (By similarity).</text>
</comment>
<comment type="subcellular location">
    <subcellularLocation>
        <location evidence="1">Nucleus</location>
    </subcellularLocation>
    <text>Associates with chromatin.</text>
</comment>
<comment type="similarity">
    <text evidence="4">Belongs to the treslin family.</text>
</comment>
<comment type="sequence caution" evidence="4">
    <conflict type="erroneous initiation">
        <sequence resource="EMBL-CDS" id="AAH58634"/>
    </conflict>
    <text>Truncated N-terminus.</text>
</comment>
<comment type="sequence caution" evidence="4">
    <conflict type="erroneous initiation">
        <sequence resource="EMBL-CDS" id="BAC28152"/>
    </conflict>
    <text>Truncated N-terminus.</text>
</comment>
<comment type="sequence caution" evidence="4">
    <conflict type="frameshift">
        <sequence resource="EMBL-CDS" id="BAC34701"/>
    </conflict>
</comment>
<evidence type="ECO:0000250" key="1"/>
<evidence type="ECO:0000250" key="2">
    <source>
        <dbReference type="UniProtKB" id="Q7Z2Z1"/>
    </source>
</evidence>
<evidence type="ECO:0000256" key="3">
    <source>
        <dbReference type="SAM" id="MobiDB-lite"/>
    </source>
</evidence>
<evidence type="ECO:0000305" key="4"/>
<evidence type="ECO:0007744" key="5">
    <source>
    </source>
</evidence>
<evidence type="ECO:0007744" key="6">
    <source>
    </source>
</evidence>
<name>TICRR_MOUSE</name>
<dbReference type="EMBL" id="AC114988">
    <property type="status" value="NOT_ANNOTATED_CDS"/>
    <property type="molecule type" value="Genomic_DNA"/>
</dbReference>
<dbReference type="EMBL" id="AC158582">
    <property type="status" value="NOT_ANNOTATED_CDS"/>
    <property type="molecule type" value="Genomic_DNA"/>
</dbReference>
<dbReference type="EMBL" id="BC058634">
    <property type="protein sequence ID" value="AAH58634.1"/>
    <property type="status" value="ALT_INIT"/>
    <property type="molecule type" value="mRNA"/>
</dbReference>
<dbReference type="EMBL" id="BC158103">
    <property type="protein sequence ID" value="AAI58104.1"/>
    <property type="molecule type" value="mRNA"/>
</dbReference>
<dbReference type="EMBL" id="AK033104">
    <property type="protein sequence ID" value="BAC28152.1"/>
    <property type="status" value="ALT_INIT"/>
    <property type="molecule type" value="mRNA"/>
</dbReference>
<dbReference type="EMBL" id="AK041726">
    <property type="protein sequence ID" value="BAC31045.1"/>
    <property type="molecule type" value="mRNA"/>
</dbReference>
<dbReference type="EMBL" id="AK051639">
    <property type="protein sequence ID" value="BAC34701.1"/>
    <property type="status" value="ALT_FRAME"/>
    <property type="molecule type" value="mRNA"/>
</dbReference>
<dbReference type="CCDS" id="CCDS21384.1"/>
<dbReference type="RefSeq" id="NP_084111.1">
    <property type="nucleotide sequence ID" value="NM_029835.1"/>
</dbReference>
<dbReference type="FunCoup" id="Q8BQ33">
    <property type="interactions" value="3008"/>
</dbReference>
<dbReference type="STRING" id="10090.ENSMUSP00000041377"/>
<dbReference type="GlyGen" id="Q8BQ33">
    <property type="glycosylation" value="3 sites"/>
</dbReference>
<dbReference type="iPTMnet" id="Q8BQ33"/>
<dbReference type="PhosphoSitePlus" id="Q8BQ33"/>
<dbReference type="jPOST" id="Q8BQ33"/>
<dbReference type="PaxDb" id="10090-ENSMUSP00000041377"/>
<dbReference type="PeptideAtlas" id="Q8BQ33"/>
<dbReference type="ProteomicsDB" id="262921"/>
<dbReference type="Pumba" id="Q8BQ33"/>
<dbReference type="Antibodypedia" id="64736">
    <property type="antibodies" value="51 antibodies from 19 providers"/>
</dbReference>
<dbReference type="DNASU" id="77011"/>
<dbReference type="Ensembl" id="ENSMUST00000035977.9">
    <property type="protein sequence ID" value="ENSMUSP00000041377.8"/>
    <property type="gene ID" value="ENSMUSG00000046591.11"/>
</dbReference>
<dbReference type="GeneID" id="77011"/>
<dbReference type="KEGG" id="mmu:77011"/>
<dbReference type="UCSC" id="uc009hyp.1">
    <property type="organism name" value="mouse"/>
</dbReference>
<dbReference type="AGR" id="MGI:1924261"/>
<dbReference type="CTD" id="90381"/>
<dbReference type="MGI" id="MGI:1924261">
    <property type="gene designation" value="Ticrr"/>
</dbReference>
<dbReference type="VEuPathDB" id="HostDB:ENSMUSG00000046591"/>
<dbReference type="eggNOG" id="ENOG502QW0J">
    <property type="taxonomic scope" value="Eukaryota"/>
</dbReference>
<dbReference type="GeneTree" id="ENSGT00390000005222"/>
<dbReference type="HOGENOM" id="CLU_241727_0_0_1"/>
<dbReference type="InParanoid" id="Q8BQ33"/>
<dbReference type="OMA" id="LYWMEKL"/>
<dbReference type="OrthoDB" id="5812172at2759"/>
<dbReference type="PhylomeDB" id="Q8BQ33"/>
<dbReference type="TreeFam" id="TF332114"/>
<dbReference type="BioGRID-ORCS" id="77011">
    <property type="hits" value="32 hits in 113 CRISPR screens"/>
</dbReference>
<dbReference type="ChiTaRS" id="Ticrr">
    <property type="organism name" value="mouse"/>
</dbReference>
<dbReference type="PRO" id="PR:Q8BQ33"/>
<dbReference type="Proteomes" id="UP000000589">
    <property type="component" value="Chromosome 7"/>
</dbReference>
<dbReference type="RNAct" id="Q8BQ33">
    <property type="molecule type" value="protein"/>
</dbReference>
<dbReference type="Bgee" id="ENSMUSG00000046591">
    <property type="expression patterns" value="Expressed in animal zygote and 105 other cell types or tissues"/>
</dbReference>
<dbReference type="ExpressionAtlas" id="Q8BQ33">
    <property type="expression patterns" value="baseline and differential"/>
</dbReference>
<dbReference type="GO" id="GO:0005829">
    <property type="term" value="C:cytosol"/>
    <property type="evidence" value="ECO:0007669"/>
    <property type="project" value="Ensembl"/>
</dbReference>
<dbReference type="GO" id="GO:0005654">
    <property type="term" value="C:nucleoplasm"/>
    <property type="evidence" value="ECO:0007669"/>
    <property type="project" value="Ensembl"/>
</dbReference>
<dbReference type="GO" id="GO:0005634">
    <property type="term" value="C:nucleus"/>
    <property type="evidence" value="ECO:0000250"/>
    <property type="project" value="UniProtKB"/>
</dbReference>
<dbReference type="GO" id="GO:0003682">
    <property type="term" value="F:chromatin binding"/>
    <property type="evidence" value="ECO:0000250"/>
    <property type="project" value="UniProtKB"/>
</dbReference>
<dbReference type="GO" id="GO:0006281">
    <property type="term" value="P:DNA repair"/>
    <property type="evidence" value="ECO:0000250"/>
    <property type="project" value="UniProtKB"/>
</dbReference>
<dbReference type="GO" id="GO:0006260">
    <property type="term" value="P:DNA replication"/>
    <property type="evidence" value="ECO:0000250"/>
    <property type="project" value="UniProtKB"/>
</dbReference>
<dbReference type="GO" id="GO:0033314">
    <property type="term" value="P:mitotic DNA replication checkpoint signaling"/>
    <property type="evidence" value="ECO:0000250"/>
    <property type="project" value="UniProtKB"/>
</dbReference>
<dbReference type="GO" id="GO:0007095">
    <property type="term" value="P:mitotic G2 DNA damage checkpoint signaling"/>
    <property type="evidence" value="ECO:0000250"/>
    <property type="project" value="UniProtKB"/>
</dbReference>
<dbReference type="GO" id="GO:0030174">
    <property type="term" value="P:regulation of DNA-templated DNA replication initiation"/>
    <property type="evidence" value="ECO:0000250"/>
    <property type="project" value="UniProtKB"/>
</dbReference>
<dbReference type="GO" id="GO:0010212">
    <property type="term" value="P:response to ionizing radiation"/>
    <property type="evidence" value="ECO:0000250"/>
    <property type="project" value="UniProtKB"/>
</dbReference>
<dbReference type="InterPro" id="IPR026153">
    <property type="entry name" value="Treslin"/>
</dbReference>
<dbReference type="InterPro" id="IPR032746">
    <property type="entry name" value="Treslin_M"/>
</dbReference>
<dbReference type="InterPro" id="IPR053919">
    <property type="entry name" value="Treslin_N"/>
</dbReference>
<dbReference type="InterPro" id="IPR053920">
    <property type="entry name" value="Treslin_STD"/>
</dbReference>
<dbReference type="PANTHER" id="PTHR21556">
    <property type="entry name" value="TRESLIN"/>
    <property type="match status" value="1"/>
</dbReference>
<dbReference type="PANTHER" id="PTHR21556:SF2">
    <property type="entry name" value="TRESLIN"/>
    <property type="match status" value="1"/>
</dbReference>
<dbReference type="Pfam" id="PF15292">
    <property type="entry name" value="Treslin_M"/>
    <property type="match status" value="1"/>
</dbReference>
<dbReference type="Pfam" id="PF21854">
    <property type="entry name" value="Treslin_N"/>
    <property type="match status" value="1"/>
</dbReference>
<dbReference type="Pfam" id="PF21855">
    <property type="entry name" value="Treslin_STD"/>
    <property type="match status" value="1"/>
</dbReference>
<sequence>MACCHKVMLLVDTAGVSAPHSPARRAALRLLTYLSCRFGLARVHWTFKFFDSQGARSRPSRVSDFRELGSRSWEDFEEELEARLGDRPPGAHLPGPTPRATHTHGALMETLLDYQWDRPEITSPTKPILRSSGRRLLDADGEAREAQAALGGFGNAVFLLAPCPHSQRELLQFVSGCEAQAQRVPLTPKQVMEKVLPKRVQEVMIARNITLYWVDTTERSKLWASPDHVGYWTVCELLHHGGGTILPAETWSLGFTKARETVLPCGGELSHKPHPSPWISALPIDATVNCLLYNSEYEASFPRIEGTLFLPVQGKEIEETWAISLEPLAMHQRHFQKPVRIVLRGSVAQWSLPVSSALGTDSWMLQSPEEHRSTQRLLFQELVSRLTAEEFHLVASVDPGEGWPPITGIISPFSANAMILTVFRAKEAEFQSHFLQTAATEGSQDTASLFSDVVDSVLNQSHNLFEDPASSAPCVPEWVQQELSHTSSWSPALVEKWFPFSNASGATSDLMESFWLLHAASPDNDESSKTESELTRCLSELYQRSHEESTVVNQERSRKKRGIPRTPVRQKMNTMSRSLKMLNVARLNVKAQKLHPDGSPDTAVEKGLQKAVIGRTADKLEDRGRILRSSKLKEFKTEEELLAYIHDNYQKAVATEEITLYSCAQNMVSTIKMFLKSKDIKELEVACLSHVNSNLLKTSKTLRQNLAGKMDTEDKVGECQLQVFLRLEMCEQCPSVLDRPDEVERIVEEVTDLLRLVCLTKDSAYLSEFLEEILRLYIGSIPGTIGQLYHSLGLKIPQKLAGVLPTGFFSDDSMSQESMSPPPSSSTHRSVSAITESEQLEELRTRSAKKRRKNALIRHKSIAEISQTLRQIEVPKVSKRATRNENSHSASIQLPVPRKDTIQEVTKVRRNLFNQEMLSPSKRGLKKGLPRSHSVSALECLHHKQDKFKKTKSSTFQGYCKLLTKSVAETPVHKQISRRLLHRQIKGRSSDPGPDIHVVEESPEKEDEMTLRRSPRIKQLSFSRTNSGSFYSVSQPKSRSVQRIHSSQQESEQRENFPVQSIQSPKTLLFGALSEIPSSSKKGSAQIKRSLRSMLDSEISTSYETPKKSNQKSPSFSKTTPRRFPRTAQTLLYTPERLQNSPTEMTSAEGTISEATIKTPSSHGYNSPFASKVTSQKTVSPAKEETSPPLTKLPSTPRESDVQPPQCSSDCTWPHSVNSSPEGPYYPASPPPMAGQARSQCLTPIRYSFRTPPRTALAGTSKQQEHQELPLPRASQTQEPPQGLEKKALKIPKKPAHTSTSPLSPEEHYSGCDVSPHQPRNSLSASPPPGELNWKEHQTSPSVTSSVSCPVPSTPPRTPQRMTCPIPPSPPSKLRRSCRKKSCPPQDFPECHPGPSAAPVLSSATSPGAVTGSREEQSQFSEGQSYLGTGFRSDCHVSSPVLTASDTKCLPLIDEAQLHGLKNQEVKSGILPGEEGEEPESTIADELPSVSDPGILVPAPSSVSSSSELLPYPLCCTADGKQRQDAAQQGSPRASEATSSPQTYEVELEMQASGLPKLRIKKIDPGVLLEAEALGKEAPLGEEGALPALCMPKASKSSGRTEHPYLSPPCLRPSHSTPGKNGGQTFICQSCTPSRCPPSTPSPFQADAGVSWTPSPKQSGKTTPEIIKDWPRRKRAVDCSAGPSAGRGEASMDLPGSLSLLEPEPEGKERSLEQDLSKVLISEEFELEGVCQLPDQSPPKDSASVTEETSWGQFGLGRKRFLSAKEESEYKVKRVCDSLSEDPQASKQKECSPRWSALPLHSVGDDEVFVSGSTPPSGCMVRSCLSASGLQALTQSPLLFQGRTPSSHSTDTRDEEVDVFPSTAEESPFSHTLSRKRPFRTYTRKKLIS</sequence>
<reference key="1">
    <citation type="journal article" date="2009" name="PLoS Biol.">
        <title>Lineage-specific biology revealed by a finished genome assembly of the mouse.</title>
        <authorList>
            <person name="Church D.M."/>
            <person name="Goodstadt L."/>
            <person name="Hillier L.W."/>
            <person name="Zody M.C."/>
            <person name="Goldstein S."/>
            <person name="She X."/>
            <person name="Bult C.J."/>
            <person name="Agarwala R."/>
            <person name="Cherry J.L."/>
            <person name="DiCuccio M."/>
            <person name="Hlavina W."/>
            <person name="Kapustin Y."/>
            <person name="Meric P."/>
            <person name="Maglott D."/>
            <person name="Birtle Z."/>
            <person name="Marques A.C."/>
            <person name="Graves T."/>
            <person name="Zhou S."/>
            <person name="Teague B."/>
            <person name="Potamousis K."/>
            <person name="Churas C."/>
            <person name="Place M."/>
            <person name="Herschleb J."/>
            <person name="Runnheim R."/>
            <person name="Forrest D."/>
            <person name="Amos-Landgraf J."/>
            <person name="Schwartz D.C."/>
            <person name="Cheng Z."/>
            <person name="Lindblad-Toh K."/>
            <person name="Eichler E.E."/>
            <person name="Ponting C.P."/>
        </authorList>
    </citation>
    <scope>NUCLEOTIDE SEQUENCE [LARGE SCALE GENOMIC DNA]</scope>
    <source>
        <strain>C57BL/6J</strain>
    </source>
</reference>
<reference key="2">
    <citation type="journal article" date="2004" name="Genome Res.">
        <title>The status, quality, and expansion of the NIH full-length cDNA project: the Mammalian Gene Collection (MGC).</title>
        <authorList>
            <consortium name="The MGC Project Team"/>
        </authorList>
    </citation>
    <scope>NUCLEOTIDE SEQUENCE [LARGE SCALE MRNA]</scope>
    <source>
        <strain>C57BL/6J</strain>
        <tissue>Brain</tissue>
    </source>
</reference>
<reference key="3">
    <citation type="journal article" date="2005" name="Science">
        <title>The transcriptional landscape of the mammalian genome.</title>
        <authorList>
            <person name="Carninci P."/>
            <person name="Kasukawa T."/>
            <person name="Katayama S."/>
            <person name="Gough J."/>
            <person name="Frith M.C."/>
            <person name="Maeda N."/>
            <person name="Oyama R."/>
            <person name="Ravasi T."/>
            <person name="Lenhard B."/>
            <person name="Wells C."/>
            <person name="Kodzius R."/>
            <person name="Shimokawa K."/>
            <person name="Bajic V.B."/>
            <person name="Brenner S.E."/>
            <person name="Batalov S."/>
            <person name="Forrest A.R."/>
            <person name="Zavolan M."/>
            <person name="Davis M.J."/>
            <person name="Wilming L.G."/>
            <person name="Aidinis V."/>
            <person name="Allen J.E."/>
            <person name="Ambesi-Impiombato A."/>
            <person name="Apweiler R."/>
            <person name="Aturaliya R.N."/>
            <person name="Bailey T.L."/>
            <person name="Bansal M."/>
            <person name="Baxter L."/>
            <person name="Beisel K.W."/>
            <person name="Bersano T."/>
            <person name="Bono H."/>
            <person name="Chalk A.M."/>
            <person name="Chiu K.P."/>
            <person name="Choudhary V."/>
            <person name="Christoffels A."/>
            <person name="Clutterbuck D.R."/>
            <person name="Crowe M.L."/>
            <person name="Dalla E."/>
            <person name="Dalrymple B.P."/>
            <person name="de Bono B."/>
            <person name="Della Gatta G."/>
            <person name="di Bernardo D."/>
            <person name="Down T."/>
            <person name="Engstrom P."/>
            <person name="Fagiolini M."/>
            <person name="Faulkner G."/>
            <person name="Fletcher C.F."/>
            <person name="Fukushima T."/>
            <person name="Furuno M."/>
            <person name="Futaki S."/>
            <person name="Gariboldi M."/>
            <person name="Georgii-Hemming P."/>
            <person name="Gingeras T.R."/>
            <person name="Gojobori T."/>
            <person name="Green R.E."/>
            <person name="Gustincich S."/>
            <person name="Harbers M."/>
            <person name="Hayashi Y."/>
            <person name="Hensch T.K."/>
            <person name="Hirokawa N."/>
            <person name="Hill D."/>
            <person name="Huminiecki L."/>
            <person name="Iacono M."/>
            <person name="Ikeo K."/>
            <person name="Iwama A."/>
            <person name="Ishikawa T."/>
            <person name="Jakt M."/>
            <person name="Kanapin A."/>
            <person name="Katoh M."/>
            <person name="Kawasawa Y."/>
            <person name="Kelso J."/>
            <person name="Kitamura H."/>
            <person name="Kitano H."/>
            <person name="Kollias G."/>
            <person name="Krishnan S.P."/>
            <person name="Kruger A."/>
            <person name="Kummerfeld S.K."/>
            <person name="Kurochkin I.V."/>
            <person name="Lareau L.F."/>
            <person name="Lazarevic D."/>
            <person name="Lipovich L."/>
            <person name="Liu J."/>
            <person name="Liuni S."/>
            <person name="McWilliam S."/>
            <person name="Madan Babu M."/>
            <person name="Madera M."/>
            <person name="Marchionni L."/>
            <person name="Matsuda H."/>
            <person name="Matsuzawa S."/>
            <person name="Miki H."/>
            <person name="Mignone F."/>
            <person name="Miyake S."/>
            <person name="Morris K."/>
            <person name="Mottagui-Tabar S."/>
            <person name="Mulder N."/>
            <person name="Nakano N."/>
            <person name="Nakauchi H."/>
            <person name="Ng P."/>
            <person name="Nilsson R."/>
            <person name="Nishiguchi S."/>
            <person name="Nishikawa S."/>
            <person name="Nori F."/>
            <person name="Ohara O."/>
            <person name="Okazaki Y."/>
            <person name="Orlando V."/>
            <person name="Pang K.C."/>
            <person name="Pavan W.J."/>
            <person name="Pavesi G."/>
            <person name="Pesole G."/>
            <person name="Petrovsky N."/>
            <person name="Piazza S."/>
            <person name="Reed J."/>
            <person name="Reid J.F."/>
            <person name="Ring B.Z."/>
            <person name="Ringwald M."/>
            <person name="Rost B."/>
            <person name="Ruan Y."/>
            <person name="Salzberg S.L."/>
            <person name="Sandelin A."/>
            <person name="Schneider C."/>
            <person name="Schoenbach C."/>
            <person name="Sekiguchi K."/>
            <person name="Semple C.A."/>
            <person name="Seno S."/>
            <person name="Sessa L."/>
            <person name="Sheng Y."/>
            <person name="Shibata Y."/>
            <person name="Shimada H."/>
            <person name="Shimada K."/>
            <person name="Silva D."/>
            <person name="Sinclair B."/>
            <person name="Sperling S."/>
            <person name="Stupka E."/>
            <person name="Sugiura K."/>
            <person name="Sultana R."/>
            <person name="Takenaka Y."/>
            <person name="Taki K."/>
            <person name="Tammoja K."/>
            <person name="Tan S.L."/>
            <person name="Tang S."/>
            <person name="Taylor M.S."/>
            <person name="Tegner J."/>
            <person name="Teichmann S.A."/>
            <person name="Ueda H.R."/>
            <person name="van Nimwegen E."/>
            <person name="Verardo R."/>
            <person name="Wei C.L."/>
            <person name="Yagi K."/>
            <person name="Yamanishi H."/>
            <person name="Zabarovsky E."/>
            <person name="Zhu S."/>
            <person name="Zimmer A."/>
            <person name="Hide W."/>
            <person name="Bult C."/>
            <person name="Grimmond S.M."/>
            <person name="Teasdale R.D."/>
            <person name="Liu E.T."/>
            <person name="Brusic V."/>
            <person name="Quackenbush J."/>
            <person name="Wahlestedt C."/>
            <person name="Mattick J.S."/>
            <person name="Hume D.A."/>
            <person name="Kai C."/>
            <person name="Sasaki D."/>
            <person name="Tomaru Y."/>
            <person name="Fukuda S."/>
            <person name="Kanamori-Katayama M."/>
            <person name="Suzuki M."/>
            <person name="Aoki J."/>
            <person name="Arakawa T."/>
            <person name="Iida J."/>
            <person name="Imamura K."/>
            <person name="Itoh M."/>
            <person name="Kato T."/>
            <person name="Kawaji H."/>
            <person name="Kawagashira N."/>
            <person name="Kawashima T."/>
            <person name="Kojima M."/>
            <person name="Kondo S."/>
            <person name="Konno H."/>
            <person name="Nakano K."/>
            <person name="Ninomiya N."/>
            <person name="Nishio T."/>
            <person name="Okada M."/>
            <person name="Plessy C."/>
            <person name="Shibata K."/>
            <person name="Shiraki T."/>
            <person name="Suzuki S."/>
            <person name="Tagami M."/>
            <person name="Waki K."/>
            <person name="Watahiki A."/>
            <person name="Okamura-Oho Y."/>
            <person name="Suzuki H."/>
            <person name="Kawai J."/>
            <person name="Hayashizaki Y."/>
        </authorList>
    </citation>
    <scope>NUCLEOTIDE SEQUENCE [LARGE SCALE MRNA] OF 1-1175 AND 1438-1889</scope>
    <source>
        <strain>C57BL/6J</strain>
        <tissue>Spinal ganglion</tissue>
        <tissue>Testis</tissue>
        <tissue>Thymus</tissue>
    </source>
</reference>
<reference key="4">
    <citation type="journal article" date="2009" name="Immunity">
        <title>The phagosomal proteome in interferon-gamma-activated macrophages.</title>
        <authorList>
            <person name="Trost M."/>
            <person name="English L."/>
            <person name="Lemieux S."/>
            <person name="Courcelles M."/>
            <person name="Desjardins M."/>
            <person name="Thibault P."/>
        </authorList>
    </citation>
    <scope>PHOSPHORYLATION [LARGE SCALE ANALYSIS] AT SER-599</scope>
    <scope>IDENTIFICATION BY MASS SPECTROMETRY [LARGE SCALE ANALYSIS]</scope>
</reference>
<reference key="5">
    <citation type="journal article" date="2010" name="Cell">
        <title>A tissue-specific atlas of mouse protein phosphorylation and expression.</title>
        <authorList>
            <person name="Huttlin E.L."/>
            <person name="Jedrychowski M.P."/>
            <person name="Elias J.E."/>
            <person name="Goswami T."/>
            <person name="Rad R."/>
            <person name="Beausoleil S.A."/>
            <person name="Villen J."/>
            <person name="Haas W."/>
            <person name="Sowa M.E."/>
            <person name="Gygi S.P."/>
        </authorList>
    </citation>
    <scope>PHOSPHORYLATION [LARGE SCALE ANALYSIS] AT SER-599; SER-1002; SER-1027 AND SER-1141</scope>
    <scope>IDENTIFICATION BY MASS SPECTROMETRY [LARGE SCALE ANALYSIS]</scope>
    <source>
        <tissue>Lung</tissue>
        <tissue>Spleen</tissue>
        <tissue>Testis</tissue>
    </source>
</reference>
<feature type="chain" id="PRO_0000296624" description="Treslin">
    <location>
        <begin position="1"/>
        <end position="1889"/>
    </location>
</feature>
<feature type="region of interest" description="Disordered" evidence="3">
    <location>
        <begin position="812"/>
        <end position="836"/>
    </location>
</feature>
<feature type="region of interest" description="Disordered" evidence="3">
    <location>
        <begin position="979"/>
        <end position="1063"/>
    </location>
</feature>
<feature type="region of interest" description="Disordered" evidence="3">
    <location>
        <begin position="1098"/>
        <end position="1421"/>
    </location>
</feature>
<feature type="region of interest" description="Disordered" evidence="3">
    <location>
        <begin position="1471"/>
        <end position="1508"/>
    </location>
</feature>
<feature type="region of interest" description="Disordered" evidence="3">
    <location>
        <begin position="1520"/>
        <end position="1543"/>
    </location>
</feature>
<feature type="region of interest" description="Disordered" evidence="3">
    <location>
        <begin position="1630"/>
        <end position="1714"/>
    </location>
</feature>
<feature type="region of interest" description="Disordered" evidence="3">
    <location>
        <begin position="1730"/>
        <end position="1751"/>
    </location>
</feature>
<feature type="region of interest" description="Disordered" evidence="3">
    <location>
        <begin position="1841"/>
        <end position="1875"/>
    </location>
</feature>
<feature type="compositionally biased region" description="Low complexity" evidence="3">
    <location>
        <begin position="812"/>
        <end position="832"/>
    </location>
</feature>
<feature type="compositionally biased region" description="Polar residues" evidence="3">
    <location>
        <begin position="1020"/>
        <end position="1050"/>
    </location>
</feature>
<feature type="compositionally biased region" description="Polar residues" evidence="3">
    <location>
        <begin position="1127"/>
        <end position="1179"/>
    </location>
</feature>
<feature type="compositionally biased region" description="Low complexity" evidence="3">
    <location>
        <begin position="1187"/>
        <end position="1197"/>
    </location>
</feature>
<feature type="compositionally biased region" description="Polar residues" evidence="3">
    <location>
        <begin position="1203"/>
        <end position="1219"/>
    </location>
</feature>
<feature type="compositionally biased region" description="Low complexity" evidence="3">
    <location>
        <begin position="1339"/>
        <end position="1351"/>
    </location>
</feature>
<feature type="compositionally biased region" description="Basic residues" evidence="3">
    <location>
        <begin position="1373"/>
        <end position="1382"/>
    </location>
</feature>
<feature type="compositionally biased region" description="Low complexity" evidence="3">
    <location>
        <begin position="1496"/>
        <end position="1508"/>
    </location>
</feature>
<feature type="compositionally biased region" description="Polar residues" evidence="3">
    <location>
        <begin position="1525"/>
        <end position="1543"/>
    </location>
</feature>
<feature type="compositionally biased region" description="Polar residues" evidence="3">
    <location>
        <begin position="1652"/>
        <end position="1662"/>
    </location>
</feature>
<feature type="compositionally biased region" description="Basic and acidic residues" evidence="3">
    <location>
        <begin position="1705"/>
        <end position="1714"/>
    </location>
</feature>
<feature type="modified residue" description="Phosphoserine" evidence="2">
    <location>
        <position position="295"/>
    </location>
</feature>
<feature type="modified residue" description="Phosphoserine" evidence="5 6">
    <location>
        <position position="599"/>
    </location>
</feature>
<feature type="modified residue" description="Phosphoserine" evidence="2">
    <location>
        <position position="820"/>
    </location>
</feature>
<feature type="modified residue" description="Phosphoserine" evidence="2">
    <location>
        <position position="861"/>
    </location>
</feature>
<feature type="modified residue" description="Phosphoserine" evidence="2">
    <location>
        <position position="919"/>
    </location>
</feature>
<feature type="modified residue" description="Phosphoserine" evidence="2">
    <location>
        <position position="934"/>
    </location>
</feature>
<feature type="modified residue" description="Phosphoserine" evidence="6">
    <location>
        <position position="1002"/>
    </location>
</feature>
<feature type="modified residue" description="Phosphoserine" evidence="6">
    <location>
        <position position="1027"/>
    </location>
</feature>
<feature type="modified residue" description="Phosphoserine" evidence="2">
    <location>
        <position position="1078"/>
    </location>
</feature>
<feature type="modified residue" description="Phosphothreonine" evidence="2">
    <location>
        <position position="1134"/>
    </location>
</feature>
<feature type="modified residue" description="Phosphoserine" evidence="6">
    <location>
        <position position="1141"/>
    </location>
</feature>
<feature type="modified residue" description="Phosphoserine" evidence="2">
    <location>
        <position position="1406"/>
    </location>
</feature>
<feature type="sequence conflict" description="In Ref. 3; BAC31045." evidence="4" ref="3">
    <original>V</original>
    <variation>G</variation>
    <location>
        <position position="7"/>
    </location>
</feature>
<feature type="sequence conflict" description="In Ref. 3; BAC28152." evidence="4" ref="3">
    <original>P</original>
    <variation>A</variation>
    <location>
        <position position="1513"/>
    </location>
</feature>
<accession>Q8BQ33</accession>
<accession>B2RY55</accession>
<accession>Q8C9N4</accession>
<accession>Q8CCI2</accession>
<proteinExistence type="evidence at protein level"/>
<organism>
    <name type="scientific">Mus musculus</name>
    <name type="common">Mouse</name>
    <dbReference type="NCBI Taxonomy" id="10090"/>
    <lineage>
        <taxon>Eukaryota</taxon>
        <taxon>Metazoa</taxon>
        <taxon>Chordata</taxon>
        <taxon>Craniata</taxon>
        <taxon>Vertebrata</taxon>
        <taxon>Euteleostomi</taxon>
        <taxon>Mammalia</taxon>
        <taxon>Eutheria</taxon>
        <taxon>Euarchontoglires</taxon>
        <taxon>Glires</taxon>
        <taxon>Rodentia</taxon>
        <taxon>Myomorpha</taxon>
        <taxon>Muroidea</taxon>
        <taxon>Muridae</taxon>
        <taxon>Murinae</taxon>
        <taxon>Mus</taxon>
        <taxon>Mus</taxon>
    </lineage>
</organism>
<keyword id="KW-0131">Cell cycle</keyword>
<keyword id="KW-0227">DNA damage</keyword>
<keyword id="KW-0234">DNA repair</keyword>
<keyword id="KW-0539">Nucleus</keyword>
<keyword id="KW-0597">Phosphoprotein</keyword>
<keyword id="KW-1185">Reference proteome</keyword>